<sequence length="694" mass="77212">MATLAYSIEVEGLEDETLVVRGFHGQESLSNSVFLGQACYGFRYQMQLASRVSNLTADQMVDKRAELKLYRNSQLVQRVHGIVRAFSQGDIGHHHTFYQLTLVPALERLSLRHNSRIFQKQTVPEILSILLQEMGIHDYAFALKRDCVQREFCVQYRESDIDFLHRLAAEEGLVYSFVHEAGKHTLYFSDASDSLSKLPEPIPYNALAGGTMDTPYIHGLTYRTQAEVSEVQLKDYSFKKPAYSFLQTVQGTELDYQQTRYQHFDAPGRYKDDVNGAAFSQIRLDYLRRHAHTATGQSNEPLLRAGYKFDLQEHLDPAMNRDWVVVSINHQGEQPQALQEEGGSGATTYNNQFSLIPGHLHWRAEPQPKPQVDGPMIATVVGPEGEEIFCDEHGRVKIHFPWDRYSNGNEQSSCWVRVSQGWAGSQYGFIAIPRIGHEVIVSFLNGDPDQPIITGRTYHATNTPPYTLPEHKTKTVLRTETHQGEGFNELSFEDQAGKEQIYLHAQKDFDGLIENDHTTVIRHDQHLTVENDQFTQIKHNQHLTVEGESRTLVKLDCSSEIGGSLQQKIGSKAIYDAGTEVHLKAGNKLVLEAGNELTIKAGGSFIKVDAGGVHVVGSAINLNSGGSAGSGSGYGGKMAELPQGVDKAKTPQEIELAAVTPTQQSMSPLLKARQIEALKGPAPVCEVCEEAKGN</sequence>
<reference key="1">
    <citation type="journal article" date="2000" name="Nature">
        <title>DNA sequence of both chromosomes of the cholera pathogen Vibrio cholerae.</title>
        <authorList>
            <person name="Heidelberg J.F."/>
            <person name="Eisen J.A."/>
            <person name="Nelson W.C."/>
            <person name="Clayton R.A."/>
            <person name="Gwinn M.L."/>
            <person name="Dodson R.J."/>
            <person name="Haft D.H."/>
            <person name="Hickey E.K."/>
            <person name="Peterson J.D."/>
            <person name="Umayam L.A."/>
            <person name="Gill S.R."/>
            <person name="Nelson K.E."/>
            <person name="Read T.D."/>
            <person name="Tettelin H."/>
            <person name="Richardson D.L."/>
            <person name="Ermolaeva M.D."/>
            <person name="Vamathevan J.J."/>
            <person name="Bass S."/>
            <person name="Qin H."/>
            <person name="Dragoi I."/>
            <person name="Sellers P."/>
            <person name="McDonald L.A."/>
            <person name="Utterback T.R."/>
            <person name="Fleischmann R.D."/>
            <person name="Nierman W.C."/>
            <person name="White O."/>
            <person name="Salzberg S.L."/>
            <person name="Smith H.O."/>
            <person name="Colwell R.R."/>
            <person name="Mekalanos J.J."/>
            <person name="Venter J.C."/>
            <person name="Fraser C.M."/>
        </authorList>
    </citation>
    <scope>NUCLEOTIDE SEQUENCE [LARGE SCALE GENOMIC DNA]</scope>
    <source>
        <strain>ATCC 39315 / El Tor Inaba N16961</strain>
    </source>
</reference>
<reference key="2">
    <citation type="journal article" date="2009" name="EMBO J.">
        <title>Remodelling of VipA/VipB tubules by ClpV-mediated threading is crucial for type VI protein secretion.</title>
        <authorList>
            <person name="Boenemann G."/>
            <person name="Pietrosiuk A."/>
            <person name="Diemand A."/>
            <person name="Zentgraf H."/>
            <person name="Mogk A."/>
        </authorList>
    </citation>
    <scope>SUBCELLULAR LOCATION</scope>
</reference>
<reference key="3">
    <citation type="journal article" date="2011" name="Infect. Immun.">
        <title>Vibrio cholerae requires the type VI secretion system virulence factor VasX to kill Dictyostelium discoideum.</title>
        <authorList>
            <person name="Miyata S.T."/>
            <person name="Kitaoka M."/>
            <person name="Brooks T.M."/>
            <person name="McAuley S.B."/>
            <person name="Pukatzki S."/>
        </authorList>
    </citation>
    <scope>FUNCTION</scope>
    <scope>DISRUPTION PHENOTYPE</scope>
</reference>
<gene>
    <name type="primary">vgrG2</name>
    <name type="ordered locus">VC_A0018</name>
</gene>
<organism>
    <name type="scientific">Vibrio cholerae serotype O1 (strain ATCC 39315 / El Tor Inaba N16961)</name>
    <dbReference type="NCBI Taxonomy" id="243277"/>
    <lineage>
        <taxon>Bacteria</taxon>
        <taxon>Pseudomonadati</taxon>
        <taxon>Pseudomonadota</taxon>
        <taxon>Gammaproteobacteria</taxon>
        <taxon>Vibrionales</taxon>
        <taxon>Vibrionaceae</taxon>
        <taxon>Vibrio</taxon>
    </lineage>
</organism>
<protein>
    <recommendedName>
        <fullName>Type VI secretion system spike protein VgrG2</fullName>
    </recommendedName>
</protein>
<keyword id="KW-1185">Reference proteome</keyword>
<keyword id="KW-0964">Secreted</keyword>
<comment type="function">
    <text evidence="2">Part of the type VI secretion system specialized secretion system, which delivers several virulence factors in both prokaryotic and eukaryotic cells during infection (PubMed:21555399). Forms the spike at the tip of the elongating tube formed by haemolysin co-regulated protein Hcp. Allows the delivery of the VasX antibacterial toxin to target cells where it exerts its toxicity (PubMed:21555399).</text>
</comment>
<comment type="subcellular location">
    <subcellularLocation>
        <location evidence="1">Secreted</location>
    </subcellularLocation>
</comment>
<comment type="disruption phenotype">
    <text evidence="2">Mutants are unable to secrete VasX.</text>
</comment>
<comment type="similarity">
    <text evidence="3">Belongs to the VgrG protein family.</text>
</comment>
<evidence type="ECO:0000269" key="1">
    <source>
    </source>
</evidence>
<evidence type="ECO:0000269" key="2">
    <source>
    </source>
</evidence>
<evidence type="ECO:0000305" key="3"/>
<dbReference type="EMBL" id="AE003853">
    <property type="protein sequence ID" value="AAF95932.1"/>
    <property type="molecule type" value="Genomic_DNA"/>
</dbReference>
<dbReference type="PIR" id="F82511">
    <property type="entry name" value="F82511"/>
</dbReference>
<dbReference type="RefSeq" id="NP_232419.1">
    <property type="nucleotide sequence ID" value="NC_002506.1"/>
</dbReference>
<dbReference type="RefSeq" id="WP_000212125.1">
    <property type="nucleotide sequence ID" value="NZ_LT906615.1"/>
</dbReference>
<dbReference type="SMR" id="Q9KNE7"/>
<dbReference type="STRING" id="243277.VC_A0018"/>
<dbReference type="DNASU" id="2612507"/>
<dbReference type="EnsemblBacteria" id="AAF95932">
    <property type="protein sequence ID" value="AAF95932"/>
    <property type="gene ID" value="VC_A0018"/>
</dbReference>
<dbReference type="KEGG" id="vch:VC_A0018"/>
<dbReference type="PATRIC" id="fig|243277.26.peg.2665"/>
<dbReference type="eggNOG" id="COG3501">
    <property type="taxonomic scope" value="Bacteria"/>
</dbReference>
<dbReference type="HOGENOM" id="CLU_004121_7_2_6"/>
<dbReference type="Proteomes" id="UP000000584">
    <property type="component" value="Chromosome 2"/>
</dbReference>
<dbReference type="GO" id="GO:0005576">
    <property type="term" value="C:extracellular region"/>
    <property type="evidence" value="ECO:0007669"/>
    <property type="project" value="UniProtKB-SubCell"/>
</dbReference>
<dbReference type="FunFam" id="3.55.50.10:FF:000001">
    <property type="entry name" value="Actin cross-linking toxin VgrG1"/>
    <property type="match status" value="1"/>
</dbReference>
<dbReference type="Gene3D" id="2.30.110.50">
    <property type="match status" value="1"/>
</dbReference>
<dbReference type="Gene3D" id="4.10.220.110">
    <property type="match status" value="1"/>
</dbReference>
<dbReference type="Gene3D" id="3.55.50.10">
    <property type="entry name" value="Baseplate protein-like domains"/>
    <property type="match status" value="1"/>
</dbReference>
<dbReference type="Gene3D" id="2.40.50.230">
    <property type="entry name" value="Gp5 N-terminal domain"/>
    <property type="match status" value="1"/>
</dbReference>
<dbReference type="InterPro" id="IPR006531">
    <property type="entry name" value="Gp5/Vgr_OB"/>
</dbReference>
<dbReference type="InterPro" id="IPR054030">
    <property type="entry name" value="Gp5_Vgr_C"/>
</dbReference>
<dbReference type="InterPro" id="IPR017847">
    <property type="entry name" value="T6SS_RhsGE_Vgr_subset"/>
</dbReference>
<dbReference type="InterPro" id="IPR006533">
    <property type="entry name" value="T6SS_Vgr_RhsGE"/>
</dbReference>
<dbReference type="InterPro" id="IPR050708">
    <property type="entry name" value="T6SS_VgrG/RHS"/>
</dbReference>
<dbReference type="InterPro" id="IPR037026">
    <property type="entry name" value="Vgr_OB-fold_dom_sf"/>
</dbReference>
<dbReference type="NCBIfam" id="TIGR01646">
    <property type="entry name" value="vgr_GE"/>
    <property type="match status" value="1"/>
</dbReference>
<dbReference type="NCBIfam" id="TIGR03361">
    <property type="entry name" value="VI_Rhs_Vgr"/>
    <property type="match status" value="1"/>
</dbReference>
<dbReference type="PANTHER" id="PTHR32305">
    <property type="match status" value="1"/>
</dbReference>
<dbReference type="PANTHER" id="PTHR32305:SF11">
    <property type="entry name" value="TYPE VI SECRETION SYSTEM SPIKE PROTEIN VGRG3"/>
    <property type="match status" value="1"/>
</dbReference>
<dbReference type="Pfam" id="PF22178">
    <property type="entry name" value="Gp5_trimer_C"/>
    <property type="match status" value="1"/>
</dbReference>
<dbReference type="Pfam" id="PF04717">
    <property type="entry name" value="Phage_base_V"/>
    <property type="match status" value="1"/>
</dbReference>
<dbReference type="Pfam" id="PF05954">
    <property type="entry name" value="Phage_GPD"/>
    <property type="match status" value="1"/>
</dbReference>
<dbReference type="SUPFAM" id="SSF69255">
    <property type="entry name" value="gp5 N-terminal domain-like"/>
    <property type="match status" value="1"/>
</dbReference>
<dbReference type="SUPFAM" id="SSF69349">
    <property type="entry name" value="Phage fibre proteins"/>
    <property type="match status" value="1"/>
</dbReference>
<dbReference type="SUPFAM" id="SSF69279">
    <property type="entry name" value="Phage tail proteins"/>
    <property type="match status" value="2"/>
</dbReference>
<name>VGRG2_VIBCH</name>
<accession>Q9KNE7</accession>
<proteinExistence type="inferred from homology"/>
<feature type="chain" id="PRO_0000448966" description="Type VI secretion system spike protein VgrG2">
    <location>
        <begin position="1"/>
        <end position="694"/>
    </location>
</feature>